<dbReference type="EMBL" id="CU928164">
    <property type="protein sequence ID" value="CAR20763.1"/>
    <property type="molecule type" value="Genomic_DNA"/>
</dbReference>
<dbReference type="RefSeq" id="WP_001216676.1">
    <property type="nucleotide sequence ID" value="NC_011750.1"/>
</dbReference>
<dbReference type="RefSeq" id="YP_002410526.1">
    <property type="nucleotide sequence ID" value="NC_011750.1"/>
</dbReference>
<dbReference type="SMR" id="B7NTQ6"/>
<dbReference type="STRING" id="585057.ECIAI39_4665"/>
<dbReference type="GeneID" id="93777623"/>
<dbReference type="KEGG" id="ect:ECIAI39_4665"/>
<dbReference type="PATRIC" id="fig|585057.6.peg.4812"/>
<dbReference type="HOGENOM" id="CLU_113441_6_1_6"/>
<dbReference type="Proteomes" id="UP000000749">
    <property type="component" value="Chromosome"/>
</dbReference>
<dbReference type="GO" id="GO:0022627">
    <property type="term" value="C:cytosolic small ribosomal subunit"/>
    <property type="evidence" value="ECO:0007669"/>
    <property type="project" value="TreeGrafter"/>
</dbReference>
<dbReference type="GO" id="GO:0070181">
    <property type="term" value="F:small ribosomal subunit rRNA binding"/>
    <property type="evidence" value="ECO:0007669"/>
    <property type="project" value="TreeGrafter"/>
</dbReference>
<dbReference type="GO" id="GO:0003735">
    <property type="term" value="F:structural constituent of ribosome"/>
    <property type="evidence" value="ECO:0007669"/>
    <property type="project" value="InterPro"/>
</dbReference>
<dbReference type="GO" id="GO:0006412">
    <property type="term" value="P:translation"/>
    <property type="evidence" value="ECO:0007669"/>
    <property type="project" value="UniProtKB-UniRule"/>
</dbReference>
<dbReference type="CDD" id="cd00473">
    <property type="entry name" value="bS6"/>
    <property type="match status" value="1"/>
</dbReference>
<dbReference type="FunFam" id="3.30.70.60:FF:000003">
    <property type="entry name" value="30S ribosomal protein S6"/>
    <property type="match status" value="1"/>
</dbReference>
<dbReference type="Gene3D" id="3.30.70.60">
    <property type="match status" value="1"/>
</dbReference>
<dbReference type="HAMAP" id="MF_00360">
    <property type="entry name" value="Ribosomal_bS6"/>
    <property type="match status" value="1"/>
</dbReference>
<dbReference type="InterPro" id="IPR000529">
    <property type="entry name" value="Ribosomal_bS6"/>
</dbReference>
<dbReference type="InterPro" id="IPR020815">
    <property type="entry name" value="Ribosomal_bS6_CS"/>
</dbReference>
<dbReference type="InterPro" id="IPR035980">
    <property type="entry name" value="Ribosomal_bS6_sf"/>
</dbReference>
<dbReference type="InterPro" id="IPR020814">
    <property type="entry name" value="Ribosomal_S6_plastid/chlpt"/>
</dbReference>
<dbReference type="InterPro" id="IPR014717">
    <property type="entry name" value="Transl_elong_EF1B/ribsomal_bS6"/>
</dbReference>
<dbReference type="NCBIfam" id="TIGR00166">
    <property type="entry name" value="S6"/>
    <property type="match status" value="1"/>
</dbReference>
<dbReference type="PANTHER" id="PTHR21011">
    <property type="entry name" value="MITOCHONDRIAL 28S RIBOSOMAL PROTEIN S6"/>
    <property type="match status" value="1"/>
</dbReference>
<dbReference type="PANTHER" id="PTHR21011:SF1">
    <property type="entry name" value="SMALL RIBOSOMAL SUBUNIT PROTEIN BS6M"/>
    <property type="match status" value="1"/>
</dbReference>
<dbReference type="Pfam" id="PF01250">
    <property type="entry name" value="Ribosomal_S6"/>
    <property type="match status" value="1"/>
</dbReference>
<dbReference type="SUPFAM" id="SSF54995">
    <property type="entry name" value="Ribosomal protein S6"/>
    <property type="match status" value="1"/>
</dbReference>
<dbReference type="PROSITE" id="PS01048">
    <property type="entry name" value="RIBOSOMAL_S6"/>
    <property type="match status" value="1"/>
</dbReference>
<keyword id="KW-0007">Acetylation</keyword>
<keyword id="KW-0687">Ribonucleoprotein</keyword>
<keyword id="KW-0689">Ribosomal protein</keyword>
<keyword id="KW-0694">RNA-binding</keyword>
<keyword id="KW-0699">rRNA-binding</keyword>
<name>RS6_ECO7I</name>
<gene>
    <name evidence="1" type="primary">rpsF</name>
    <name type="ordered locus">ECIAI39_4665</name>
</gene>
<evidence type="ECO:0000255" key="1">
    <source>
        <dbReference type="HAMAP-Rule" id="MF_00360"/>
    </source>
</evidence>
<evidence type="ECO:0000256" key="2">
    <source>
        <dbReference type="SAM" id="MobiDB-lite"/>
    </source>
</evidence>
<evidence type="ECO:0000305" key="3"/>
<feature type="chain" id="PRO_1000120745" description="Small ribosomal subunit protein bS6">
    <location>
        <begin position="1"/>
        <end position="131"/>
    </location>
</feature>
<feature type="region of interest" description="Disordered" evidence="2">
    <location>
        <begin position="98"/>
        <end position="131"/>
    </location>
</feature>
<feature type="compositionally biased region" description="Basic and acidic residues" evidence="2">
    <location>
        <begin position="104"/>
        <end position="116"/>
    </location>
</feature>
<feature type="compositionally biased region" description="Acidic residues" evidence="2">
    <location>
        <begin position="120"/>
        <end position="131"/>
    </location>
</feature>
<feature type="modified residue" description="N6-acetyllysine" evidence="1">
    <location>
        <position position="93"/>
    </location>
</feature>
<proteinExistence type="inferred from homology"/>
<organism>
    <name type="scientific">Escherichia coli O7:K1 (strain IAI39 / ExPEC)</name>
    <dbReference type="NCBI Taxonomy" id="585057"/>
    <lineage>
        <taxon>Bacteria</taxon>
        <taxon>Pseudomonadati</taxon>
        <taxon>Pseudomonadota</taxon>
        <taxon>Gammaproteobacteria</taxon>
        <taxon>Enterobacterales</taxon>
        <taxon>Enterobacteriaceae</taxon>
        <taxon>Escherichia</taxon>
    </lineage>
</organism>
<sequence>MRHYEIVFMVHPDQSEQVPGMIERYTAAITGAEGKIHRLEDWGRRQLAYPINKLHKAHYVLMNVEAPQEVIDELETTFRFNDAVIRSMVMRTKHAVTEASPMVKAKDERRERRDDFANETADDAEAGDSEE</sequence>
<protein>
    <recommendedName>
        <fullName evidence="1">Small ribosomal subunit protein bS6</fullName>
    </recommendedName>
    <alternativeName>
        <fullName evidence="3">30S ribosomal protein S6</fullName>
    </alternativeName>
</protein>
<accession>B7NTQ6</accession>
<reference key="1">
    <citation type="journal article" date="2009" name="PLoS Genet.">
        <title>Organised genome dynamics in the Escherichia coli species results in highly diverse adaptive paths.</title>
        <authorList>
            <person name="Touchon M."/>
            <person name="Hoede C."/>
            <person name="Tenaillon O."/>
            <person name="Barbe V."/>
            <person name="Baeriswyl S."/>
            <person name="Bidet P."/>
            <person name="Bingen E."/>
            <person name="Bonacorsi S."/>
            <person name="Bouchier C."/>
            <person name="Bouvet O."/>
            <person name="Calteau A."/>
            <person name="Chiapello H."/>
            <person name="Clermont O."/>
            <person name="Cruveiller S."/>
            <person name="Danchin A."/>
            <person name="Diard M."/>
            <person name="Dossat C."/>
            <person name="Karoui M.E."/>
            <person name="Frapy E."/>
            <person name="Garry L."/>
            <person name="Ghigo J.M."/>
            <person name="Gilles A.M."/>
            <person name="Johnson J."/>
            <person name="Le Bouguenec C."/>
            <person name="Lescat M."/>
            <person name="Mangenot S."/>
            <person name="Martinez-Jehanne V."/>
            <person name="Matic I."/>
            <person name="Nassif X."/>
            <person name="Oztas S."/>
            <person name="Petit M.A."/>
            <person name="Pichon C."/>
            <person name="Rouy Z."/>
            <person name="Ruf C.S."/>
            <person name="Schneider D."/>
            <person name="Tourret J."/>
            <person name="Vacherie B."/>
            <person name="Vallenet D."/>
            <person name="Medigue C."/>
            <person name="Rocha E.P.C."/>
            <person name="Denamur E."/>
        </authorList>
    </citation>
    <scope>NUCLEOTIDE SEQUENCE [LARGE SCALE GENOMIC DNA]</scope>
    <source>
        <strain>IAI39 / ExPEC</strain>
    </source>
</reference>
<comment type="function">
    <text evidence="1">Binds together with bS18 to 16S ribosomal RNA.</text>
</comment>
<comment type="similarity">
    <text evidence="1">Belongs to the bacterial ribosomal protein bS6 family.</text>
</comment>